<dbReference type="EC" id="3.4.23.36" evidence="1"/>
<dbReference type="EMBL" id="CP001120">
    <property type="protein sequence ID" value="ACF67840.1"/>
    <property type="molecule type" value="Genomic_DNA"/>
</dbReference>
<dbReference type="RefSeq" id="WP_000042739.1">
    <property type="nucleotide sequence ID" value="NC_011083.1"/>
</dbReference>
<dbReference type="SMR" id="B4TIE6"/>
<dbReference type="MEROPS" id="A08.001"/>
<dbReference type="KEGG" id="seh:SeHA_C0050"/>
<dbReference type="HOGENOM" id="CLU_083252_4_0_6"/>
<dbReference type="UniPathway" id="UPA00665"/>
<dbReference type="Proteomes" id="UP000001866">
    <property type="component" value="Chromosome"/>
</dbReference>
<dbReference type="GO" id="GO:0005886">
    <property type="term" value="C:plasma membrane"/>
    <property type="evidence" value="ECO:0007669"/>
    <property type="project" value="UniProtKB-SubCell"/>
</dbReference>
<dbReference type="GO" id="GO:0004190">
    <property type="term" value="F:aspartic-type endopeptidase activity"/>
    <property type="evidence" value="ECO:0007669"/>
    <property type="project" value="UniProtKB-UniRule"/>
</dbReference>
<dbReference type="GO" id="GO:0006508">
    <property type="term" value="P:proteolysis"/>
    <property type="evidence" value="ECO:0007669"/>
    <property type="project" value="UniProtKB-KW"/>
</dbReference>
<dbReference type="HAMAP" id="MF_00161">
    <property type="entry name" value="LspA"/>
    <property type="match status" value="1"/>
</dbReference>
<dbReference type="InterPro" id="IPR001872">
    <property type="entry name" value="Peptidase_A8"/>
</dbReference>
<dbReference type="NCBIfam" id="TIGR00077">
    <property type="entry name" value="lspA"/>
    <property type="match status" value="1"/>
</dbReference>
<dbReference type="PANTHER" id="PTHR33695">
    <property type="entry name" value="LIPOPROTEIN SIGNAL PEPTIDASE"/>
    <property type="match status" value="1"/>
</dbReference>
<dbReference type="PANTHER" id="PTHR33695:SF1">
    <property type="entry name" value="LIPOPROTEIN SIGNAL PEPTIDASE"/>
    <property type="match status" value="1"/>
</dbReference>
<dbReference type="Pfam" id="PF01252">
    <property type="entry name" value="Peptidase_A8"/>
    <property type="match status" value="1"/>
</dbReference>
<dbReference type="PRINTS" id="PR00781">
    <property type="entry name" value="LIPOSIGPTASE"/>
</dbReference>
<dbReference type="PROSITE" id="PS00855">
    <property type="entry name" value="SPASE_II"/>
    <property type="match status" value="1"/>
</dbReference>
<reference key="1">
    <citation type="journal article" date="2011" name="J. Bacteriol.">
        <title>Comparative genomics of 28 Salmonella enterica isolates: evidence for CRISPR-mediated adaptive sublineage evolution.</title>
        <authorList>
            <person name="Fricke W.F."/>
            <person name="Mammel M.K."/>
            <person name="McDermott P.F."/>
            <person name="Tartera C."/>
            <person name="White D.G."/>
            <person name="Leclerc J.E."/>
            <person name="Ravel J."/>
            <person name="Cebula T.A."/>
        </authorList>
    </citation>
    <scope>NUCLEOTIDE SEQUENCE [LARGE SCALE GENOMIC DNA]</scope>
    <source>
        <strain>SL476</strain>
    </source>
</reference>
<organism>
    <name type="scientific">Salmonella heidelberg (strain SL476)</name>
    <dbReference type="NCBI Taxonomy" id="454169"/>
    <lineage>
        <taxon>Bacteria</taxon>
        <taxon>Pseudomonadati</taxon>
        <taxon>Pseudomonadota</taxon>
        <taxon>Gammaproteobacteria</taxon>
        <taxon>Enterobacterales</taxon>
        <taxon>Enterobacteriaceae</taxon>
        <taxon>Salmonella</taxon>
    </lineage>
</organism>
<evidence type="ECO:0000255" key="1">
    <source>
        <dbReference type="HAMAP-Rule" id="MF_00161"/>
    </source>
</evidence>
<proteinExistence type="inferred from homology"/>
<feature type="chain" id="PRO_1000097277" description="Lipoprotein signal peptidase">
    <location>
        <begin position="1"/>
        <end position="166"/>
    </location>
</feature>
<feature type="transmembrane region" description="Helical" evidence="1">
    <location>
        <begin position="12"/>
        <end position="32"/>
    </location>
</feature>
<feature type="transmembrane region" description="Helical" evidence="1">
    <location>
        <begin position="70"/>
        <end position="90"/>
    </location>
</feature>
<feature type="transmembrane region" description="Helical" evidence="1">
    <location>
        <begin position="102"/>
        <end position="122"/>
    </location>
</feature>
<feature type="transmembrane region" description="Helical" evidence="1">
    <location>
        <begin position="137"/>
        <end position="157"/>
    </location>
</feature>
<feature type="active site" evidence="1">
    <location>
        <position position="123"/>
    </location>
</feature>
<feature type="active site" evidence="1">
    <location>
        <position position="141"/>
    </location>
</feature>
<protein>
    <recommendedName>
        <fullName evidence="1">Lipoprotein signal peptidase</fullName>
        <ecNumber evidence="1">3.4.23.36</ecNumber>
    </recommendedName>
    <alternativeName>
        <fullName evidence="1">Prolipoprotein signal peptidase</fullName>
    </alternativeName>
    <alternativeName>
        <fullName evidence="1">Signal peptidase II</fullName>
        <shortName evidence="1">SPase II</shortName>
    </alternativeName>
</protein>
<accession>B4TIE6</accession>
<sequence>MSKPLCSTGLRWLWLVVVVLIIDLGSKYLILQNFALGDTVGLFPSLNLHYARNYGAAFSFLADSGGWQRWFFAGIAIGICVILLVMMYRSKATQKLNNIAYALIIGGALGNLFDRLWHGFVVDMIDFYVGNWHFATFNLADSAICIGAALIVLEGFLPKPTAKEQA</sequence>
<comment type="function">
    <text evidence="1">This protein specifically catalyzes the removal of signal peptides from prolipoproteins.</text>
</comment>
<comment type="catalytic activity">
    <reaction evidence="1">
        <text>Release of signal peptides from bacterial membrane prolipoproteins. Hydrolyzes -Xaa-Yaa-Zaa-|-(S,diacylglyceryl)Cys-, in which Xaa is hydrophobic (preferably Leu), and Yaa (Ala or Ser) and Zaa (Gly or Ala) have small, neutral side chains.</text>
        <dbReference type="EC" id="3.4.23.36"/>
    </reaction>
</comment>
<comment type="pathway">
    <text evidence="1">Protein modification; lipoprotein biosynthesis (signal peptide cleavage).</text>
</comment>
<comment type="subcellular location">
    <subcellularLocation>
        <location evidence="1">Cell inner membrane</location>
        <topology evidence="1">Multi-pass membrane protein</topology>
    </subcellularLocation>
</comment>
<comment type="similarity">
    <text evidence="1">Belongs to the peptidase A8 family.</text>
</comment>
<gene>
    <name evidence="1" type="primary">lspA</name>
    <name type="ordered locus">SeHA_C0050</name>
</gene>
<name>LSPA_SALHS</name>
<keyword id="KW-0064">Aspartyl protease</keyword>
<keyword id="KW-0997">Cell inner membrane</keyword>
<keyword id="KW-1003">Cell membrane</keyword>
<keyword id="KW-0378">Hydrolase</keyword>
<keyword id="KW-0472">Membrane</keyword>
<keyword id="KW-0645">Protease</keyword>
<keyword id="KW-0812">Transmembrane</keyword>
<keyword id="KW-1133">Transmembrane helix</keyword>